<accession>O99255</accession>
<protein>
    <recommendedName>
        <fullName>Cytochrome c oxidase subunit 1</fullName>
        <ecNumber>7.1.1.9</ecNumber>
    </recommendedName>
    <alternativeName>
        <fullName>Cytochrome c oxidase polypeptide I</fullName>
    </alternativeName>
</protein>
<gene>
    <name type="primary">COI</name>
</gene>
<organism>
    <name type="scientific">Plasmodium chabaudi</name>
    <dbReference type="NCBI Taxonomy" id="5825"/>
    <lineage>
        <taxon>Eukaryota</taxon>
        <taxon>Sar</taxon>
        <taxon>Alveolata</taxon>
        <taxon>Apicomplexa</taxon>
        <taxon>Aconoidasida</taxon>
        <taxon>Haemosporida</taxon>
        <taxon>Plasmodiidae</taxon>
        <taxon>Plasmodium</taxon>
        <taxon>Plasmodium (Vinckeia)</taxon>
    </lineage>
</organism>
<dbReference type="EC" id="7.1.1.9"/>
<dbReference type="EMBL" id="AF014116">
    <property type="protein sequence ID" value="AAD01528.1"/>
    <property type="status" value="ALT_SEQ"/>
    <property type="molecule type" value="Genomic_DNA"/>
</dbReference>
<dbReference type="SMR" id="O99255"/>
<dbReference type="VEuPathDB" id="PlasmoDB:PCHAS_MIT01700"/>
<dbReference type="UniPathway" id="UPA00705"/>
<dbReference type="GO" id="GO:0005743">
    <property type="term" value="C:mitochondrial inner membrane"/>
    <property type="evidence" value="ECO:0007669"/>
    <property type="project" value="UniProtKB-SubCell"/>
</dbReference>
<dbReference type="GO" id="GO:0004129">
    <property type="term" value="F:cytochrome-c oxidase activity"/>
    <property type="evidence" value="ECO:0007669"/>
    <property type="project" value="UniProtKB-EC"/>
</dbReference>
<dbReference type="GO" id="GO:0020037">
    <property type="term" value="F:heme binding"/>
    <property type="evidence" value="ECO:0007669"/>
    <property type="project" value="InterPro"/>
</dbReference>
<dbReference type="GO" id="GO:0046872">
    <property type="term" value="F:metal ion binding"/>
    <property type="evidence" value="ECO:0007669"/>
    <property type="project" value="UniProtKB-KW"/>
</dbReference>
<dbReference type="GO" id="GO:0015990">
    <property type="term" value="P:electron transport coupled proton transport"/>
    <property type="evidence" value="ECO:0007669"/>
    <property type="project" value="TreeGrafter"/>
</dbReference>
<dbReference type="GO" id="GO:0006123">
    <property type="term" value="P:mitochondrial electron transport, cytochrome c to oxygen"/>
    <property type="evidence" value="ECO:0007669"/>
    <property type="project" value="TreeGrafter"/>
</dbReference>
<dbReference type="FunFam" id="1.20.210.10:FF:000007">
    <property type="entry name" value="Cytochrome c oxidase subunit 1"/>
    <property type="match status" value="1"/>
</dbReference>
<dbReference type="Gene3D" id="1.20.210.10">
    <property type="entry name" value="Cytochrome c oxidase-like, subunit I domain"/>
    <property type="match status" value="1"/>
</dbReference>
<dbReference type="InterPro" id="IPR023616">
    <property type="entry name" value="Cyt_c_oxase-like_su1_dom"/>
</dbReference>
<dbReference type="InterPro" id="IPR036927">
    <property type="entry name" value="Cyt_c_oxase-like_su1_sf"/>
</dbReference>
<dbReference type="InterPro" id="IPR000883">
    <property type="entry name" value="Cyt_C_Oxase_1"/>
</dbReference>
<dbReference type="InterPro" id="IPR023615">
    <property type="entry name" value="Cyt_c_Oxase_su1_BS"/>
</dbReference>
<dbReference type="PANTHER" id="PTHR10422">
    <property type="entry name" value="CYTOCHROME C OXIDASE SUBUNIT 1"/>
    <property type="match status" value="1"/>
</dbReference>
<dbReference type="PANTHER" id="PTHR10422:SF18">
    <property type="entry name" value="CYTOCHROME C OXIDASE SUBUNIT 1"/>
    <property type="match status" value="1"/>
</dbReference>
<dbReference type="Pfam" id="PF00115">
    <property type="entry name" value="COX1"/>
    <property type="match status" value="1"/>
</dbReference>
<dbReference type="PRINTS" id="PR01165">
    <property type="entry name" value="CYCOXIDASEI"/>
</dbReference>
<dbReference type="SUPFAM" id="SSF81442">
    <property type="entry name" value="Cytochrome c oxidase subunit I-like"/>
    <property type="match status" value="1"/>
</dbReference>
<dbReference type="PROSITE" id="PS50855">
    <property type="entry name" value="COX1"/>
    <property type="match status" value="1"/>
</dbReference>
<dbReference type="PROSITE" id="PS00077">
    <property type="entry name" value="COX1_CUB"/>
    <property type="match status" value="1"/>
</dbReference>
<comment type="function">
    <text evidence="2">Component of the cytochrome c oxidase, the last enzyme in the mitochondrial electron transport chain which drives oxidative phosphorylation. The respiratory chain contains 3 multisubunit complexes succinate dehydrogenase (complex II, CII), ubiquinol-cytochrome c oxidoreductase (cytochrome b-c1 complex, complex III, CIII) and cytochrome c oxidase (complex IV, CIV), that cooperate to transfer electrons derived from NADH and succinate to molecular oxygen, creating an electrochemical gradient over the inner membrane that drives transmembrane transport and the ATP synthase. Cytochrome c oxidase is the component of the respiratory chain that catalyzes the reduction of oxygen to water. Electrons originating from reduced cytochrome c in the intermembrane space (IMS) are transferred via the dinuclear copper A center (CU(A)) of subunit 2 and heme A of subunit 1 to the active site in subunit 1, a binuclear center (BNC) formed by heme A3 and copper B (CU(B)). The BNC reduces molecular oxygen to 2 water molecules using 4 electrons from cytochrome c in the IMS and 4 protons from the mitochondrial matrix.</text>
</comment>
<comment type="catalytic activity">
    <reaction evidence="2">
        <text>4 Fe(II)-[cytochrome c] + O2 + 8 H(+)(in) = 4 Fe(III)-[cytochrome c] + 2 H2O + 4 H(+)(out)</text>
        <dbReference type="Rhea" id="RHEA:11436"/>
        <dbReference type="Rhea" id="RHEA-COMP:10350"/>
        <dbReference type="Rhea" id="RHEA-COMP:14399"/>
        <dbReference type="ChEBI" id="CHEBI:15377"/>
        <dbReference type="ChEBI" id="CHEBI:15378"/>
        <dbReference type="ChEBI" id="CHEBI:15379"/>
        <dbReference type="ChEBI" id="CHEBI:29033"/>
        <dbReference type="ChEBI" id="CHEBI:29034"/>
        <dbReference type="EC" id="7.1.1.9"/>
    </reaction>
    <physiologicalReaction direction="left-to-right" evidence="2">
        <dbReference type="Rhea" id="RHEA:11437"/>
    </physiologicalReaction>
</comment>
<comment type="cofactor">
    <cofactor evidence="2">
        <name>heme</name>
        <dbReference type="ChEBI" id="CHEBI:30413"/>
    </cofactor>
    <text evidence="2">Binds 2 heme A groups non-covalently per subunit.</text>
</comment>
<comment type="cofactor">
    <cofactor evidence="2">
        <name>Cu cation</name>
        <dbReference type="ChEBI" id="CHEBI:23378"/>
    </cofactor>
    <text evidence="2">Binds a copper B center.</text>
</comment>
<comment type="pathway">
    <text evidence="2">Energy metabolism; oxidative phosphorylation.</text>
</comment>
<comment type="subunit">
    <text evidence="2">Component of the cytochrome c oxidase (complex IV, CIV), a multisubunit enzyme composed of a catalytic core of 3 subunits and several supernumerary subunits. The complex exists as a monomer or a dimer and forms supercomplexes (SCs) in the inner mitochondrial membrane with ubiquinol-cytochrome c oxidoreductase (cytochrome b-c1 complex, complex III, CIII).</text>
</comment>
<comment type="subcellular location">
    <subcellularLocation>
        <location evidence="2">Mitochondrion inner membrane</location>
        <topology evidence="2">Multi-pass membrane protein</topology>
    </subcellularLocation>
</comment>
<comment type="similarity">
    <text evidence="4">Belongs to the heme-copper respiratory oxidase family.</text>
</comment>
<name>COX1_PLACH</name>
<reference key="1">
    <citation type="submission" date="1997-07" db="EMBL/GenBank/DDBJ databases">
        <authorList>
            <person name="Tan T.M.C."/>
            <person name="Noviyanti R."/>
            <person name="Syafruddi N."/>
            <person name="Marzuki S."/>
            <person name="Ting R.C.Y."/>
        </authorList>
    </citation>
    <scope>NUCLEOTIDE SEQUENCE [GENOMIC DNA]</scope>
</reference>
<feature type="chain" id="PRO_0000183394" description="Cytochrome c oxidase subunit 1">
    <location>
        <begin position="1"/>
        <end position="476"/>
    </location>
</feature>
<feature type="transmembrane region" description="Helical" evidence="3">
    <location>
        <begin position="19"/>
        <end position="39"/>
    </location>
</feature>
<feature type="transmembrane region" description="Helical" evidence="3">
    <location>
        <begin position="61"/>
        <end position="81"/>
    </location>
</feature>
<feature type="transmembrane region" description="Helical" evidence="3">
    <location>
        <begin position="105"/>
        <end position="125"/>
    </location>
</feature>
<feature type="transmembrane region" description="Helical" evidence="3">
    <location>
        <begin position="144"/>
        <end position="164"/>
    </location>
</feature>
<feature type="transmembrane region" description="Helical" evidence="3">
    <location>
        <begin position="194"/>
        <end position="214"/>
    </location>
</feature>
<feature type="transmembrane region" description="Helical" evidence="3">
    <location>
        <begin position="240"/>
        <end position="260"/>
    </location>
</feature>
<feature type="transmembrane region" description="Helical" evidence="3">
    <location>
        <begin position="278"/>
        <end position="298"/>
    </location>
</feature>
<feature type="transmembrane region" description="Helical" evidence="3">
    <location>
        <begin position="309"/>
        <end position="329"/>
    </location>
</feature>
<feature type="transmembrane region" description="Helical" evidence="3">
    <location>
        <begin position="345"/>
        <end position="365"/>
    </location>
</feature>
<feature type="transmembrane region" description="Helical" evidence="3">
    <location>
        <begin position="379"/>
        <end position="399"/>
    </location>
</feature>
<feature type="transmembrane region" description="Helical" evidence="3">
    <location>
        <begin position="415"/>
        <end position="435"/>
    </location>
</feature>
<feature type="transmembrane region" description="Helical" evidence="3">
    <location>
        <begin position="455"/>
        <end position="475"/>
    </location>
</feature>
<feature type="binding site" evidence="2">
    <location>
        <position position="42"/>
    </location>
    <ligand>
        <name>Ca(2+)</name>
        <dbReference type="ChEBI" id="CHEBI:29108"/>
    </ligand>
</feature>
<feature type="binding site" description="axial binding residue" evidence="2">
    <location>
        <position position="66"/>
    </location>
    <ligand>
        <name>Fe(II)-heme a</name>
        <dbReference type="ChEBI" id="CHEBI:61715"/>
        <note>low-spin</note>
    </ligand>
    <ligandPart>
        <name>Fe</name>
        <dbReference type="ChEBI" id="CHEBI:18248"/>
    </ligandPart>
</feature>
<feature type="binding site" evidence="2">
    <location>
        <position position="246"/>
    </location>
    <ligand>
        <name>Cu cation</name>
        <dbReference type="ChEBI" id="CHEBI:23378"/>
        <label>B</label>
    </ligand>
</feature>
<feature type="binding site" evidence="1">
    <location>
        <position position="250"/>
    </location>
    <ligand>
        <name>O2</name>
        <dbReference type="ChEBI" id="CHEBI:15379"/>
    </ligand>
</feature>
<feature type="binding site" evidence="2">
    <location>
        <position position="295"/>
    </location>
    <ligand>
        <name>Cu cation</name>
        <dbReference type="ChEBI" id="CHEBI:23378"/>
        <label>B</label>
    </ligand>
</feature>
<feature type="binding site" evidence="2">
    <location>
        <position position="296"/>
    </location>
    <ligand>
        <name>Cu cation</name>
        <dbReference type="ChEBI" id="CHEBI:23378"/>
        <label>B</label>
    </ligand>
</feature>
<feature type="binding site" evidence="2">
    <location>
        <position position="374"/>
    </location>
    <ligand>
        <name>Mg(2+)</name>
        <dbReference type="ChEBI" id="CHEBI:18420"/>
        <note>ligand shared with subunit 2</note>
    </ligand>
</feature>
<feature type="binding site" evidence="2">
    <location>
        <position position="375"/>
    </location>
    <ligand>
        <name>Mg(2+)</name>
        <dbReference type="ChEBI" id="CHEBI:18420"/>
        <note>ligand shared with subunit 2</note>
    </ligand>
</feature>
<feature type="binding site" description="axial binding residue" evidence="2">
    <location>
        <position position="382"/>
    </location>
    <ligand>
        <name>heme a3</name>
        <dbReference type="ChEBI" id="CHEBI:83282"/>
        <note>high-spin</note>
    </ligand>
    <ligandPart>
        <name>Fe</name>
        <dbReference type="ChEBI" id="CHEBI:18248"/>
    </ligandPart>
</feature>
<feature type="binding site" description="axial binding residue" evidence="2">
    <location>
        <position position="384"/>
    </location>
    <ligand>
        <name>Fe(II)-heme a</name>
        <dbReference type="ChEBI" id="CHEBI:61715"/>
        <note>low-spin</note>
    </ligand>
    <ligandPart>
        <name>Fe</name>
        <dbReference type="ChEBI" id="CHEBI:18248"/>
    </ligandPart>
</feature>
<feature type="binding site" evidence="2">
    <location>
        <position position="448"/>
    </location>
    <ligand>
        <name>Ca(2+)</name>
        <dbReference type="ChEBI" id="CHEBI:29108"/>
    </ligand>
</feature>
<feature type="cross-link" description="1'-histidyl-3'-tyrosine (His-Tyr)" evidence="2">
    <location>
        <begin position="246"/>
        <end position="250"/>
    </location>
</feature>
<sequence>MVFNRYALITNCNHKTLGLYYLWFSFLFGIYGFLLSVILRTELYSSSLRIIAQENVNLYNMIFTVHGIIMIFFNIMPGLFGGFGNYYLPILCGSSELAYPRINSISLLLQPIAFILVILSTAAEFGGGTGWTWYPPLSTSLMSLSPVAVDVIVIGLLVSGIASIMSSLNFLTTVMHLRAKGLTLGILSVSTWSLIITSIMLLLTLPVLTGGVLMLLSDLHFNTLFFDPTFAGDPILYQHLLWFFGHPEVYILILPAFGIISHVISTNYSRSLFGNQSMILAMGCIAVLGSVVWVHHMYTTGLEVDTRAFFTSTTILISIPTGTKVFNWLCTYMSTNFGITHSSSLLSLLFICTFTFGGTTGVILGNGAIDVALHDTYYVIAHFHFVLSIGAIIALFTSVSFFQESFFGKTLRENTIIVLWSILFFVGVVLTFLPMHFLGFNVMPRRIPDYPDALNGWNMICSIGSTMTLFGLLIFK</sequence>
<keyword id="KW-0106">Calcium</keyword>
<keyword id="KW-0186">Copper</keyword>
<keyword id="KW-0249">Electron transport</keyword>
<keyword id="KW-0349">Heme</keyword>
<keyword id="KW-0408">Iron</keyword>
<keyword id="KW-0460">Magnesium</keyword>
<keyword id="KW-0472">Membrane</keyword>
<keyword id="KW-0479">Metal-binding</keyword>
<keyword id="KW-0496">Mitochondrion</keyword>
<keyword id="KW-0999">Mitochondrion inner membrane</keyword>
<keyword id="KW-0679">Respiratory chain</keyword>
<keyword id="KW-1278">Translocase</keyword>
<keyword id="KW-0812">Transmembrane</keyword>
<keyword id="KW-1133">Transmembrane helix</keyword>
<keyword id="KW-0813">Transport</keyword>
<evidence type="ECO:0000250" key="1">
    <source>
        <dbReference type="UniProtKB" id="P00396"/>
    </source>
</evidence>
<evidence type="ECO:0000250" key="2">
    <source>
        <dbReference type="UniProtKB" id="P00401"/>
    </source>
</evidence>
<evidence type="ECO:0000255" key="3"/>
<evidence type="ECO:0000305" key="4"/>
<geneLocation type="mitochondrion"/>
<proteinExistence type="inferred from homology"/>